<keyword id="KW-0520">NAD</keyword>
<keyword id="KW-0547">Nucleotide-binding</keyword>
<keyword id="KW-0560">Oxidoreductase</keyword>
<keyword id="KW-1185">Reference proteome</keyword>
<feature type="chain" id="PRO_0000450952" description="Alanine dehydrogenase">
    <location>
        <begin position="1"/>
        <end position="377"/>
    </location>
</feature>
<feature type="active site" description="Proton donor/acceptor" evidence="2">
    <location>
        <position position="95"/>
    </location>
</feature>
<feature type="active site" description="Proton donor/acceptor" evidence="2">
    <location>
        <position position="269"/>
    </location>
</feature>
<feature type="binding site" evidence="3">
    <location>
        <position position="15"/>
    </location>
    <ligand>
        <name>substrate</name>
    </ligand>
</feature>
<feature type="binding site" evidence="3">
    <location>
        <position position="74"/>
    </location>
    <ligand>
        <name>substrate</name>
    </ligand>
</feature>
<feature type="binding site" evidence="4">
    <location>
        <position position="133"/>
    </location>
    <ligand>
        <name>NAD(+)</name>
        <dbReference type="ChEBI" id="CHEBI:57540"/>
    </ligand>
</feature>
<feature type="binding site" evidence="4">
    <location>
        <position position="197"/>
    </location>
    <ligand>
        <name>NAD(+)</name>
        <dbReference type="ChEBI" id="CHEBI:57540"/>
    </ligand>
</feature>
<feature type="binding site" evidence="4">
    <location>
        <position position="202"/>
    </location>
    <ligand>
        <name>NAD(+)</name>
        <dbReference type="ChEBI" id="CHEBI:57540"/>
    </ligand>
</feature>
<feature type="binding site" evidence="4">
    <location>
        <position position="219"/>
    </location>
    <ligand>
        <name>NAD(+)</name>
        <dbReference type="ChEBI" id="CHEBI:57540"/>
    </ligand>
</feature>
<feature type="binding site" evidence="4">
    <location>
        <begin position="238"/>
        <end position="239"/>
    </location>
    <ligand>
        <name>NAD(+)</name>
        <dbReference type="ChEBI" id="CHEBI:57540"/>
    </ligand>
</feature>
<feature type="binding site" evidence="4">
    <location>
        <begin position="266"/>
        <end position="269"/>
    </location>
    <ligand>
        <name>NAD(+)</name>
        <dbReference type="ChEBI" id="CHEBI:57540"/>
    </ligand>
</feature>
<feature type="binding site" evidence="4">
    <location>
        <begin position="304"/>
        <end position="307"/>
    </location>
    <ligand>
        <name>NAD(+)</name>
        <dbReference type="ChEBI" id="CHEBI:57540"/>
    </ligand>
</feature>
<gene>
    <name evidence="6" type="primary">ald</name>
    <name evidence="9" type="ORF">HMPREF0179_02712</name>
</gene>
<dbReference type="EC" id="1.4.1.1" evidence="1"/>
<dbReference type="EMBL" id="ADCP02000001">
    <property type="protein sequence ID" value="EFV43469.1"/>
    <property type="molecule type" value="Genomic_DNA"/>
</dbReference>
<dbReference type="RefSeq" id="WP_005028751.1">
    <property type="nucleotide sequence ID" value="NZ_KE150238.1"/>
</dbReference>
<dbReference type="SMR" id="E5Y944"/>
<dbReference type="STRING" id="563192.HMPREF0179_02712"/>
<dbReference type="GeneID" id="78084893"/>
<dbReference type="eggNOG" id="COG0686">
    <property type="taxonomic scope" value="Bacteria"/>
</dbReference>
<dbReference type="HOGENOM" id="CLU_003376_3_0_7"/>
<dbReference type="OrthoDB" id="9804592at2"/>
<dbReference type="UniPathway" id="UPA00338"/>
<dbReference type="Proteomes" id="UP000006034">
    <property type="component" value="Unassembled WGS sequence"/>
</dbReference>
<dbReference type="GO" id="GO:0005886">
    <property type="term" value="C:plasma membrane"/>
    <property type="evidence" value="ECO:0007669"/>
    <property type="project" value="TreeGrafter"/>
</dbReference>
<dbReference type="GO" id="GO:0000286">
    <property type="term" value="F:alanine dehydrogenase activity"/>
    <property type="evidence" value="ECO:0007669"/>
    <property type="project" value="UniProtKB-EC"/>
</dbReference>
<dbReference type="GO" id="GO:0000166">
    <property type="term" value="F:nucleotide binding"/>
    <property type="evidence" value="ECO:0007669"/>
    <property type="project" value="UniProtKB-KW"/>
</dbReference>
<dbReference type="GO" id="GO:0046306">
    <property type="term" value="P:alkanesulfonate catabolic process"/>
    <property type="evidence" value="ECO:0007669"/>
    <property type="project" value="UniProtKB-UniPathway"/>
</dbReference>
<dbReference type="GO" id="GO:0042853">
    <property type="term" value="P:L-alanine catabolic process"/>
    <property type="evidence" value="ECO:0007669"/>
    <property type="project" value="InterPro"/>
</dbReference>
<dbReference type="CDD" id="cd05305">
    <property type="entry name" value="L-AlaDH"/>
    <property type="match status" value="1"/>
</dbReference>
<dbReference type="FunFam" id="3.40.50.720:FF:000049">
    <property type="entry name" value="Alanine dehydrogenase"/>
    <property type="match status" value="1"/>
</dbReference>
<dbReference type="Gene3D" id="3.40.50.720">
    <property type="entry name" value="NAD(P)-binding Rossmann-like Domain"/>
    <property type="match status" value="2"/>
</dbReference>
<dbReference type="InterPro" id="IPR008141">
    <property type="entry name" value="Ala_DH"/>
</dbReference>
<dbReference type="InterPro" id="IPR008143">
    <property type="entry name" value="Ala_DH/PNT_CS2"/>
</dbReference>
<dbReference type="InterPro" id="IPR007886">
    <property type="entry name" value="AlaDH/PNT_N"/>
</dbReference>
<dbReference type="InterPro" id="IPR007698">
    <property type="entry name" value="AlaDH/PNT_NAD(H)-bd"/>
</dbReference>
<dbReference type="InterPro" id="IPR036291">
    <property type="entry name" value="NAD(P)-bd_dom_sf"/>
</dbReference>
<dbReference type="NCBIfam" id="TIGR00518">
    <property type="entry name" value="alaDH"/>
    <property type="match status" value="1"/>
</dbReference>
<dbReference type="PANTHER" id="PTHR42795">
    <property type="entry name" value="ALANINE DEHYDROGENASE"/>
    <property type="match status" value="1"/>
</dbReference>
<dbReference type="PANTHER" id="PTHR42795:SF1">
    <property type="entry name" value="ALANINE DEHYDROGENASE"/>
    <property type="match status" value="1"/>
</dbReference>
<dbReference type="Pfam" id="PF01262">
    <property type="entry name" value="AlaDh_PNT_C"/>
    <property type="match status" value="1"/>
</dbReference>
<dbReference type="Pfam" id="PF05222">
    <property type="entry name" value="AlaDh_PNT_N"/>
    <property type="match status" value="1"/>
</dbReference>
<dbReference type="PIRSF" id="PIRSF000183">
    <property type="entry name" value="Alanine_dh"/>
    <property type="match status" value="1"/>
</dbReference>
<dbReference type="SMART" id="SM01002">
    <property type="entry name" value="AlaDh_PNT_C"/>
    <property type="match status" value="1"/>
</dbReference>
<dbReference type="SMART" id="SM01003">
    <property type="entry name" value="AlaDh_PNT_N"/>
    <property type="match status" value="1"/>
</dbReference>
<dbReference type="SUPFAM" id="SSF52283">
    <property type="entry name" value="Formate/glycerate dehydrogenase catalytic domain-like"/>
    <property type="match status" value="1"/>
</dbReference>
<dbReference type="SUPFAM" id="SSF51735">
    <property type="entry name" value="NAD(P)-binding Rossmann-fold domains"/>
    <property type="match status" value="1"/>
</dbReference>
<dbReference type="PROSITE" id="PS00837">
    <property type="entry name" value="ALADH_PNT_2"/>
    <property type="match status" value="1"/>
</dbReference>
<organism>
    <name type="scientific">Bilophila wadsworthia (strain 3_1_6)</name>
    <dbReference type="NCBI Taxonomy" id="563192"/>
    <lineage>
        <taxon>Bacteria</taxon>
        <taxon>Pseudomonadati</taxon>
        <taxon>Thermodesulfobacteriota</taxon>
        <taxon>Desulfovibrionia</taxon>
        <taxon>Desulfovibrionales</taxon>
        <taxon>Desulfovibrionaceae</taxon>
        <taxon>Bilophila</taxon>
    </lineage>
</organism>
<reference key="1">
    <citation type="submission" date="2013-04" db="EMBL/GenBank/DDBJ databases">
        <title>The Genome Sequence of Bilophila wadsworthia 3_1_6.</title>
        <authorList>
            <consortium name="The Broad Institute Genomics Platform"/>
            <person name="Earl A."/>
            <person name="Ward D."/>
            <person name="Feldgarden M."/>
            <person name="Gevers D."/>
            <person name="Sibley C."/>
            <person name="Strauss J."/>
            <person name="Allen-Vercoe E."/>
            <person name="Walker B."/>
            <person name="Young S."/>
            <person name="Zeng Q."/>
            <person name="Gargeya S."/>
            <person name="Fitzgerald M."/>
            <person name="Haas B."/>
            <person name="Abouelleil A."/>
            <person name="Allen A.W."/>
            <person name="Alvarado L."/>
            <person name="Arachchi H.M."/>
            <person name="Berlin A.M."/>
            <person name="Chapman S.B."/>
            <person name="Gainer-Dewar J."/>
            <person name="Goldberg J."/>
            <person name="Griggs A."/>
            <person name="Gujja S."/>
            <person name="Hansen M."/>
            <person name="Howarth C."/>
            <person name="Imamovic A."/>
            <person name="Ireland A."/>
            <person name="Larimer J."/>
            <person name="McCowan C."/>
            <person name="Murphy C."/>
            <person name="Pearson M."/>
            <person name="Poon T.W."/>
            <person name="Priest M."/>
            <person name="Roberts A."/>
            <person name="Saif S."/>
            <person name="Shea T."/>
            <person name="Sisk P."/>
            <person name="Sykes S."/>
            <person name="Wortman J."/>
            <person name="Nusbaum C."/>
            <person name="Birren B."/>
        </authorList>
    </citation>
    <scope>NUCLEOTIDE SEQUENCE [LARGE SCALE GENOMIC DNA]</scope>
    <source>
        <strain>3_1_6</strain>
    </source>
</reference>
<reference key="2">
    <citation type="journal article" date="2019" name="Proc. Natl. Acad. Sci. U.S.A.">
        <title>A glycyl radical enzyme enables hydrogen sulfide production by the human intestinal bacterium Bilophila wadsworthia.</title>
        <authorList>
            <person name="Peck S.C."/>
            <person name="Denger K."/>
            <person name="Burrichter A."/>
            <person name="Irwin S.M."/>
            <person name="Balskus E.P."/>
            <person name="Schleheck D."/>
        </authorList>
    </citation>
    <scope>FUNCTION</scope>
    <scope>INDUCTION BY TAURINE</scope>
    <scope>PATHWAY</scope>
    <source>
        <strain>3_1_6</strain>
    </source>
</reference>
<sequence length="377" mass="39853">MRVGIPTEIKVQEFRVGITPAGVHALKEAGHTVLVQKGAGLGSMITDEEYVAAGAQMVATAKECWDCDMVVKVKEPLAPEYDLFHEGLILYTYLHLAPEPALTKALLEKKVIGIAYETVQFDNGFLPLLAPMSEVAGRMATQVGAQMLTKIEGGMGLLMGGTAGVQAAHVVILGAGTVGLSAAKVAMGMGARVTILDSNLFRLRQIDDLFGGRIQTLASNAFNIAAATKDADLLVGSVLIPGALTPKLVTEAMVKTMKPGSAIVDVAIDQGGCIEPTAKHGATYHDKPTFKYPVNGGEVVCYSVGNMPGAVARTSTFTLTNATMPYMVDLANKGWKKACQDDKALARGINTYDGKVYFKGVSDALGYELHCTCDILK</sequence>
<comment type="function">
    <text evidence="8">Involved in an anaerobic respiration pathway that converts the sulfonate taurine (2-aminoethanesulfonate) to ammonia, acetate and sulfide. Acts as an alanine dehydrogenase that regenerates pyruvate, the amino group acceptor for the taurine--pyruvate aminotransferase enzyme, and liberates ammonia.</text>
</comment>
<comment type="catalytic activity">
    <reaction evidence="1">
        <text>L-alanine + NAD(+) + H2O = pyruvate + NH4(+) + NADH + H(+)</text>
        <dbReference type="Rhea" id="RHEA:18405"/>
        <dbReference type="ChEBI" id="CHEBI:15361"/>
        <dbReference type="ChEBI" id="CHEBI:15377"/>
        <dbReference type="ChEBI" id="CHEBI:15378"/>
        <dbReference type="ChEBI" id="CHEBI:28938"/>
        <dbReference type="ChEBI" id="CHEBI:57540"/>
        <dbReference type="ChEBI" id="CHEBI:57945"/>
        <dbReference type="ChEBI" id="CHEBI:57972"/>
        <dbReference type="EC" id="1.4.1.1"/>
    </reaction>
    <physiologicalReaction direction="left-to-right" evidence="1">
        <dbReference type="Rhea" id="RHEA:18406"/>
    </physiologicalReaction>
</comment>
<comment type="pathway">
    <text evidence="8">Organosulfur degradation; alkanesulfonate degradation.</text>
</comment>
<comment type="subunit">
    <text evidence="1">Homohexamer.</text>
</comment>
<comment type="induction">
    <text evidence="5">Highly up-regulated in the presence of taurine.</text>
</comment>
<comment type="miscellaneous">
    <text evidence="8">Taurine is an abundant dietary and host-derived molecule whose metabolism to hydrogen sulfide (H2S) by members of the human gut microbiota has many prominent connections to host health and disease. The human gut bacterium and opportunistic pathogen Bilophila wadsworthia produces H2S when respiring sulfite (HSO3-) released from organosulfonate substrates such as taurine and isethionate.</text>
</comment>
<comment type="similarity">
    <text evidence="7">Belongs to the AlaDH/PNT family.</text>
</comment>
<accession>E5Y944</accession>
<proteinExistence type="evidence at transcript level"/>
<name>DHA_BILW3</name>
<protein>
    <recommendedName>
        <fullName evidence="6">Alanine dehydrogenase</fullName>
        <ecNumber evidence="1">1.4.1.1</ecNumber>
    </recommendedName>
</protein>
<evidence type="ECO:0000250" key="1">
    <source>
        <dbReference type="UniProtKB" id="Q9AIK2"/>
    </source>
</evidence>
<evidence type="ECO:0000255" key="2">
    <source>
        <dbReference type="PIRSR" id="PIRSR000183-1"/>
    </source>
</evidence>
<evidence type="ECO:0000255" key="3">
    <source>
        <dbReference type="PIRSR" id="PIRSR000183-2"/>
    </source>
</evidence>
<evidence type="ECO:0000255" key="4">
    <source>
        <dbReference type="PIRSR" id="PIRSR000183-3"/>
    </source>
</evidence>
<evidence type="ECO:0000269" key="5">
    <source>
    </source>
</evidence>
<evidence type="ECO:0000303" key="6">
    <source>
    </source>
</evidence>
<evidence type="ECO:0000305" key="7"/>
<evidence type="ECO:0000305" key="8">
    <source>
    </source>
</evidence>
<evidence type="ECO:0000312" key="9">
    <source>
        <dbReference type="EMBL" id="EFV43469.1"/>
    </source>
</evidence>